<sequence length="66" mass="7659">ISGKELQEMSTEGSKYVNKEIKNALKEVLQIKLVMEQGREQSSVMNVMPFPLLEPLNFHDVFQPFY</sequence>
<keyword id="KW-0143">Chaperone</keyword>
<keyword id="KW-0963">Cytoplasm</keyword>
<keyword id="KW-0968">Cytoplasmic vesicle</keyword>
<keyword id="KW-0903">Direct protein sequencing</keyword>
<keyword id="KW-1015">Disulfide bond</keyword>
<keyword id="KW-0256">Endoplasmic reticulum</keyword>
<keyword id="KW-0325">Glycoprotein</keyword>
<keyword id="KW-0472">Membrane</keyword>
<keyword id="KW-0492">Microsome</keyword>
<keyword id="KW-0496">Mitochondrion</keyword>
<keyword id="KW-0539">Nucleus</keyword>
<keyword id="KW-1185">Reference proteome</keyword>
<keyword id="KW-0964">Secreted</keyword>
<keyword id="KW-0832">Ubl conjugation</keyword>
<evidence type="ECO:0000250" key="1">
    <source>
        <dbReference type="UniProtKB" id="P05371"/>
    </source>
</evidence>
<evidence type="ECO:0000250" key="2">
    <source>
        <dbReference type="UniProtKB" id="P10909"/>
    </source>
</evidence>
<evidence type="ECO:0000250" key="3">
    <source>
        <dbReference type="UniProtKB" id="Q06890"/>
    </source>
</evidence>
<evidence type="ECO:0000250" key="4">
    <source>
        <dbReference type="UniProtKB" id="Q9XSC5"/>
    </source>
</evidence>
<evidence type="ECO:0000269" key="5">
    <source>
    </source>
</evidence>
<evidence type="ECO:0000303" key="6">
    <source>
    </source>
</evidence>
<evidence type="ECO:0000305" key="7"/>
<proteinExistence type="evidence at protein level"/>
<accession>P17698</accession>
<organism>
    <name type="scientific">Ovis aries</name>
    <name type="common">Sheep</name>
    <dbReference type="NCBI Taxonomy" id="9940"/>
    <lineage>
        <taxon>Eukaryota</taxon>
        <taxon>Metazoa</taxon>
        <taxon>Chordata</taxon>
        <taxon>Craniata</taxon>
        <taxon>Vertebrata</taxon>
        <taxon>Euteleostomi</taxon>
        <taxon>Mammalia</taxon>
        <taxon>Eutheria</taxon>
        <taxon>Laurasiatheria</taxon>
        <taxon>Artiodactyla</taxon>
        <taxon>Ruminantia</taxon>
        <taxon>Pecora</taxon>
        <taxon>Bovidae</taxon>
        <taxon>Caprinae</taxon>
        <taxon>Ovis</taxon>
    </lineage>
</organism>
<feature type="chain" id="PRO_0000005547" description="Clusterin beta chain">
    <location>
        <begin position="1"/>
        <end position="45" status="greater than"/>
    </location>
</feature>
<feature type="chain" id="PRO_0000005548" description="Clusterin alpha chain">
    <location>
        <begin position="46"/>
        <end position="66" status="greater than"/>
    </location>
</feature>
<feature type="non-consecutive residues" evidence="7">
    <location>
        <begin position="36"/>
        <end position="37"/>
    </location>
</feature>
<feature type="non-consecutive residues" evidence="7">
    <location>
        <begin position="45"/>
        <end position="46"/>
    </location>
</feature>
<feature type="non-terminal residue">
    <location>
        <position position="66"/>
    </location>
</feature>
<name>CLUS_SHEEP</name>
<reference key="1">
    <citation type="journal article" date="1990" name="Biochem. J.">
        <title>Structural analysis of sulphated glycoprotein 2 from amino acid sequence. Relationship to clusterin and serum protein 40,40.</title>
        <authorList>
            <person name="Tsuruta J.K."/>
            <person name="Wong K."/>
            <person name="Fritz I.B."/>
            <person name="Griswold M.D."/>
        </authorList>
    </citation>
    <scope>PROTEIN SEQUENCE</scope>
</reference>
<reference key="2">
    <citation type="journal article" date="2005" name="Biochem. J.">
        <title>The epididymal soluble prion protein forms a high-molecular-mass complex in association with hydrophobic proteins.</title>
        <authorList>
            <person name="Ecroyd H."/>
            <person name="Belghazi M."/>
            <person name="Dacheux J.-L."/>
            <person name="Gatti J.-L."/>
        </authorList>
    </citation>
    <scope>IDENTIFICATION IN COMPLEX WITH CES5A; PRNP; BPI; MANBA AND GLB1</scope>
    <source>
        <tissue>Epididymis</tissue>
    </source>
</reference>
<protein>
    <recommendedName>
        <fullName>Clusterin</fullName>
    </recommendedName>
    <alternativeName>
        <fullName evidence="6">Sulfated glycoprotein 2</fullName>
        <shortName evidence="6">SGP-2</shortName>
    </alternativeName>
    <component>
        <recommendedName>
            <fullName>Clusterin beta chain</fullName>
        </recommendedName>
    </component>
    <component>
        <recommendedName>
            <fullName>Clusterin alpha chain</fullName>
        </recommendedName>
    </component>
</protein>
<dbReference type="SMR" id="P17698"/>
<dbReference type="STRING" id="9940.ENSOARP00000015866"/>
<dbReference type="PaxDb" id="9940-ENSOARP00000015866"/>
<dbReference type="eggNOG" id="ENOG502RBQP">
    <property type="taxonomic scope" value="Eukaryota"/>
</dbReference>
<dbReference type="Proteomes" id="UP000002356">
    <property type="component" value="Unplaced"/>
</dbReference>
<dbReference type="GO" id="GO:0042583">
    <property type="term" value="C:chromaffin granule"/>
    <property type="evidence" value="ECO:0007669"/>
    <property type="project" value="UniProtKB-SubCell"/>
</dbReference>
<dbReference type="GO" id="GO:0005737">
    <property type="term" value="C:cytoplasm"/>
    <property type="evidence" value="ECO:0000250"/>
    <property type="project" value="UniProtKB"/>
</dbReference>
<dbReference type="GO" id="GO:0005829">
    <property type="term" value="C:cytosol"/>
    <property type="evidence" value="ECO:0000250"/>
    <property type="project" value="UniProtKB"/>
</dbReference>
<dbReference type="GO" id="GO:0005576">
    <property type="term" value="C:extracellular region"/>
    <property type="evidence" value="ECO:0007669"/>
    <property type="project" value="UniProtKB-SubCell"/>
</dbReference>
<dbReference type="GO" id="GO:0043231">
    <property type="term" value="C:intracellular membrane-bounded organelle"/>
    <property type="evidence" value="ECO:0000250"/>
    <property type="project" value="UniProtKB"/>
</dbReference>
<dbReference type="GO" id="GO:0005743">
    <property type="term" value="C:mitochondrial inner membrane"/>
    <property type="evidence" value="ECO:0000250"/>
    <property type="project" value="UniProtKB"/>
</dbReference>
<dbReference type="GO" id="GO:0005739">
    <property type="term" value="C:mitochondrion"/>
    <property type="evidence" value="ECO:0000250"/>
    <property type="project" value="UniProtKB"/>
</dbReference>
<dbReference type="GO" id="GO:0005634">
    <property type="term" value="C:nucleus"/>
    <property type="evidence" value="ECO:0000250"/>
    <property type="project" value="UniProtKB"/>
</dbReference>
<dbReference type="GO" id="GO:0099020">
    <property type="term" value="C:perinuclear endoplasmic reticulum lumen"/>
    <property type="evidence" value="ECO:0000250"/>
    <property type="project" value="UniProtKB"/>
</dbReference>
<dbReference type="GO" id="GO:0051082">
    <property type="term" value="F:unfolded protein binding"/>
    <property type="evidence" value="ECO:0000250"/>
    <property type="project" value="UniProtKB"/>
</dbReference>
<dbReference type="GO" id="GO:0002434">
    <property type="term" value="P:immune complex clearance"/>
    <property type="evidence" value="ECO:0000250"/>
    <property type="project" value="UniProtKB"/>
</dbReference>
<dbReference type="GO" id="GO:1905907">
    <property type="term" value="P:negative regulation of amyloid fibril formation"/>
    <property type="evidence" value="ECO:0000250"/>
    <property type="project" value="UniProtKB"/>
</dbReference>
<dbReference type="GO" id="GO:0043065">
    <property type="term" value="P:positive regulation of apoptotic process"/>
    <property type="evidence" value="ECO:0000250"/>
    <property type="project" value="UniProtKB"/>
</dbReference>
<dbReference type="GO" id="GO:0048260">
    <property type="term" value="P:positive regulation of receptor-mediated endocytosis"/>
    <property type="evidence" value="ECO:0000250"/>
    <property type="project" value="UniProtKB"/>
</dbReference>
<dbReference type="GO" id="GO:0050821">
    <property type="term" value="P:protein stabilization"/>
    <property type="evidence" value="ECO:0000250"/>
    <property type="project" value="UniProtKB"/>
</dbReference>
<dbReference type="GO" id="GO:0042127">
    <property type="term" value="P:regulation of cell population proliferation"/>
    <property type="evidence" value="ECO:0000250"/>
    <property type="project" value="UniProtKB"/>
</dbReference>
<dbReference type="InterPro" id="IPR000753">
    <property type="entry name" value="Clusterin-like"/>
</dbReference>
<dbReference type="Pfam" id="PF01093">
    <property type="entry name" value="Clusterin"/>
    <property type="match status" value="1"/>
</dbReference>
<gene>
    <name type="primary">CLU</name>
</gene>
<comment type="function">
    <text evidence="1 2 3">Functions as extracellular chaperone that prevents aggregation of non native proteins. Prevents stress-induced aggregation of blood plasma proteins. Inhibits formation of amyloid fibrils by APP, APOC2, B2M, CALCA, CSN3, SNCA and aggregation-prone LYZ variants (in vitro). Does not require ATP. Maintains partially unfolded proteins in a state appropriate for subsequent refolding by other chaperones, such as HSPA8/HSC70. Does not refold proteins by itself. Binding to cell surface receptors triggers internalization of the chaperone-client complex and subsequent lysosomal or proteasomal degradation. When secreted, protects cells against apoptosis and against cytolysis by complement: inhibits assembly of the complement membrane attack complex (MAC) by preventing polymerization of C9 pore component of the MAC complex. Intracellular forms interact with ubiquitin and SCF (SKP1-CUL1-F-box protein) E3 ubiquitin-protein ligase complexes and promote the ubiquitination and subsequent proteasomal degradation of target proteins. Promotes proteasomal degradation of COMMD1 and IKBKB. Modulates NF-kappa-B transcriptional activity (By similarity). Following stress, promotes apoptosis (By similarity). Inhibits apoptosis when associated with the mitochondrial membrane by interference with BAX-dependent release of cytochrome c into the cytoplasm. Plays a role in the regulation of cell proliferation. An intracellular form suppresses stress-induced apoptosis by stabilizing mitochondrial membrane integrity through interaction with HSPA5. Secreted form does not affect caspase or BAX-mediated intrinsic apoptosis and TNF-induced NF-kappa-B-activity (By similarity). Secreted form act as an important modulator during neuronal differentiation through interaction with STMN3 (By similarity). Plays a role in the clearance of immune complexes that arise during cell injury (By similarity).</text>
</comment>
<comment type="subunit">
    <text evidence="1 2 5">Antiparallel disulfide-linked heterodimer of an alpha chain and a beta chain. Self-associates and forms higher oligomers. Interacts with a broad range of misfolded proteins, including APP, APOC2 and LYZ. Slightly acidic pH promotes interaction with misfolded proteins. Forms high-molecular weight oligomers upon interaction with misfolded proteins. Interacts with APOA1, LRP2, CLUAP1 and PON1. Interacts with the complement membrane attack complex. Interacts (via alpha chain) with XRCC6. Interacts with SYVN1, COMMD1, BTRC, CUL1 and with ubiquitin and SCF (SKP1-CUL1-F-box protein) E3 ubiquitin-protein ligase complexes. Interacts (via alpha chain) with BAX in stressed cells, where BAX undergoes a conformation change leading to association with the mitochondrial membrane. Does not interact with BAX in unstressed cells. Found in a complex with LTF, CLU, EPPIN and SEMG1. Interacts (immaturely glycosylated pre-secreted form) with HSPA5; this interaction promotes CLU stability and facilitates stress-induced CLU retrotranslocation from the secretory pathway to the mitochondria, thereby reducing stress-induced apoptosis by stabilizing mitochondrial membrane integrity. Interacts with BCL2L1; this interaction releases and activates BAX and promotes cell death. Interacts with TGFBR2 and ACVR1 (By similarity). Interacts (secreted form) with STMN3; this interaction may act as an important modulator during neuronal differentiation (By similarity). Component of a epididymal complex at least composed of soluble form of prion protein PRNP, CLU, BPI, CES5A, MANBA and GLB1 (PubMed:16029166).</text>
</comment>
<comment type="subcellular location">
    <subcellularLocation>
        <location evidence="2">Secreted</location>
    </subcellularLocation>
    <subcellularLocation>
        <location evidence="2">Nucleus</location>
    </subcellularLocation>
    <subcellularLocation>
        <location evidence="2">Cytoplasm</location>
    </subcellularLocation>
    <subcellularLocation>
        <location evidence="2">Mitochondrion membrane</location>
        <topology evidence="2">Peripheral membrane protein</topology>
        <orientation evidence="2">Cytoplasmic side</orientation>
    </subcellularLocation>
    <subcellularLocation>
        <location evidence="2">Cytoplasm</location>
        <location evidence="2">Cytosol</location>
    </subcellularLocation>
    <subcellularLocation>
        <location evidence="2">Microsome</location>
    </subcellularLocation>
    <subcellularLocation>
        <location evidence="2">Endoplasmic reticulum</location>
    </subcellularLocation>
    <subcellularLocation>
        <location evidence="2">Mitochondrion</location>
    </subcellularLocation>
    <subcellularLocation>
        <location evidence="2">Mitochondrion membrane</location>
    </subcellularLocation>
    <subcellularLocation>
        <location evidence="1">Cytoplasm</location>
        <location evidence="1">Perinuclear region</location>
    </subcellularLocation>
    <subcellularLocation>
        <location evidence="4">Cytoplasmic vesicle</location>
        <location evidence="4">Secretory vesicle</location>
        <location evidence="4">Chromaffin granule</location>
    </subcellularLocation>
    <text evidence="2">Can retrotranslocate from the secretory compartments to the cytosol upon cellular stress. Detected in perinuclear foci that may be aggresomes containing misfolded, ubiquitinated proteins. Detected at the mitochondrion membrane upon induction of apoptosis. Under ER stress, a immaturely glycosylated pre-secreted form retrotranslocates from the endoplasmic reticulum (ER)-Golgi network to the cytoplasm to localize in the mitochondria through HSPA5 interaction. ER stress reduces secretion. Under the stress, minor amounts of non-secreted forms accumulate in cytoplasm.</text>
</comment>
<comment type="PTM">
    <text evidence="2">Proteolytically cleaved on its way through the secretory system, probably within the Golgi lumen. Proteolytic cleavage is not necessary for its chaperone activity. All non-secreted forms are not proteolytically cleaved. Chaperone activity of uncleaved forms is dependent on a non-reducing environment.</text>
</comment>
<comment type="PTM">
    <text evidence="2">Polyubiquitinated, leading to proteasomal degradation. Under cellular stress, the intracellular level of cleaved form is reduced due to proteasomal degradation.</text>
</comment>
<comment type="PTM">
    <text evidence="2">Heavily N-glycosylated. About 30% of the protein mass is comprised of complex N-linked carbohydrate. Endoplasmic reticulum (ER) stress induces changes in glycosylation status and increases level of hypoglycosylated forms. Core carbohydrates are essential for chaperone activity. Non-secreted forms are hypoglycosylated or unglycosylated.</text>
</comment>
<comment type="similarity">
    <text evidence="7">Belongs to the clusterin family.</text>
</comment>